<reference key="1">
    <citation type="submission" date="2007-12" db="EMBL/GenBank/DDBJ databases">
        <title>Complete sequence of chromosome of Francisella philomiragia subsp. philomiragia ATCC 25017.</title>
        <authorList>
            <consortium name="US DOE Joint Genome Institute"/>
            <person name="Copeland A."/>
            <person name="Lucas S."/>
            <person name="Lapidus A."/>
            <person name="Barry K."/>
            <person name="Detter J.C."/>
            <person name="Glavina del Rio T."/>
            <person name="Hammon N."/>
            <person name="Israni S."/>
            <person name="Dalin E."/>
            <person name="Tice H."/>
            <person name="Pitluck S."/>
            <person name="Chain P."/>
            <person name="Malfatti S."/>
            <person name="Shin M."/>
            <person name="Vergez L."/>
            <person name="Schmutz J."/>
            <person name="Larimer F."/>
            <person name="Land M."/>
            <person name="Hauser L."/>
            <person name="Richardson P."/>
        </authorList>
    </citation>
    <scope>NUCLEOTIDE SEQUENCE [LARGE SCALE GENOMIC DNA]</scope>
    <source>
        <strain>ATCC 25017 / CCUG 19701 / FSC 153 / O#319-036</strain>
    </source>
</reference>
<evidence type="ECO:0000255" key="1">
    <source>
        <dbReference type="HAMAP-Rule" id="MF_00712"/>
    </source>
</evidence>
<name>GCSPA_FRAP2</name>
<proteinExistence type="inferred from homology"/>
<gene>
    <name evidence="1" type="primary">gcvPA</name>
    <name type="ordered locus">Fphi_0338</name>
</gene>
<keyword id="KW-0560">Oxidoreductase</keyword>
<sequence>MSFIPHKPEQIEKMLGTIGASSIDQLFDEIPAHLRADTLKIKDGINEIQLANQMRKRANRNHHNTNFIGAGAYSHHIPAAIWDIVARGEFYTAYTPYQAEASQGGLQVIYEFQTMMAGLTGMDASNASMYDGATALAESVLMAIRSNKKAKSQKILIAEALHPTYLRVLETITKHQGIEFDIVNLDSKNGKTDITKLEDFANTDYAAVVIQSPNFLGQLADVDGITNWAHKHGALVIAVTNPMSLAILKSPAEWGENGADIVCGEGQPMGVPLASGGPYFGFMTCKMAHVRQMPGRIVGRTVDLDGNEGFCLTLQAREQHIRRAKATSNICTNQGLMVTAATIYMSLLGAKGLERVASISHENTTKLANELSKLDGVNARFNNVSFNEVVIDLPVNAEIFVTEMEKEGIDAGYFLGEYHSDLDNSIMVCATEIHTSEDIKEYIEATKKVLARIGG</sequence>
<organism>
    <name type="scientific">Francisella philomiragia subsp. philomiragia (strain ATCC 25017 / CCUG 19701 / FSC 153 / O#319-036)</name>
    <dbReference type="NCBI Taxonomy" id="484022"/>
    <lineage>
        <taxon>Bacteria</taxon>
        <taxon>Pseudomonadati</taxon>
        <taxon>Pseudomonadota</taxon>
        <taxon>Gammaproteobacteria</taxon>
        <taxon>Thiotrichales</taxon>
        <taxon>Francisellaceae</taxon>
        <taxon>Francisella</taxon>
    </lineage>
</organism>
<protein>
    <recommendedName>
        <fullName evidence="1">Probable glycine dehydrogenase (decarboxylating) subunit 1</fullName>
        <ecNumber evidence="1">1.4.4.2</ecNumber>
    </recommendedName>
    <alternativeName>
        <fullName evidence="1">Glycine cleavage system P-protein subunit 1</fullName>
    </alternativeName>
    <alternativeName>
        <fullName evidence="1">Glycine decarboxylase subunit 1</fullName>
    </alternativeName>
    <alternativeName>
        <fullName evidence="1">Glycine dehydrogenase (aminomethyl-transferring) subunit 1</fullName>
    </alternativeName>
</protein>
<feature type="chain" id="PRO_1000083221" description="Probable glycine dehydrogenase (decarboxylating) subunit 1">
    <location>
        <begin position="1"/>
        <end position="455"/>
    </location>
</feature>
<dbReference type="EC" id="1.4.4.2" evidence="1"/>
<dbReference type="EMBL" id="CP000937">
    <property type="protein sequence ID" value="ABZ86555.1"/>
    <property type="molecule type" value="Genomic_DNA"/>
</dbReference>
<dbReference type="SMR" id="B0TZJ6"/>
<dbReference type="KEGG" id="fph:Fphi_0338"/>
<dbReference type="eggNOG" id="COG0403">
    <property type="taxonomic scope" value="Bacteria"/>
</dbReference>
<dbReference type="HOGENOM" id="CLU_004620_0_2_6"/>
<dbReference type="GO" id="GO:0004375">
    <property type="term" value="F:glycine dehydrogenase (decarboxylating) activity"/>
    <property type="evidence" value="ECO:0007669"/>
    <property type="project" value="UniProtKB-EC"/>
</dbReference>
<dbReference type="GO" id="GO:0019464">
    <property type="term" value="P:glycine decarboxylation via glycine cleavage system"/>
    <property type="evidence" value="ECO:0007669"/>
    <property type="project" value="UniProtKB-UniRule"/>
</dbReference>
<dbReference type="GO" id="GO:0009116">
    <property type="term" value="P:nucleoside metabolic process"/>
    <property type="evidence" value="ECO:0007669"/>
    <property type="project" value="InterPro"/>
</dbReference>
<dbReference type="CDD" id="cd00613">
    <property type="entry name" value="GDC-P"/>
    <property type="match status" value="1"/>
</dbReference>
<dbReference type="Gene3D" id="3.90.1150.10">
    <property type="entry name" value="Aspartate Aminotransferase, domain 1"/>
    <property type="match status" value="1"/>
</dbReference>
<dbReference type="Gene3D" id="3.40.640.10">
    <property type="entry name" value="Type I PLP-dependent aspartate aminotransferase-like (Major domain)"/>
    <property type="match status" value="1"/>
</dbReference>
<dbReference type="HAMAP" id="MF_00712">
    <property type="entry name" value="GcvPA"/>
    <property type="match status" value="1"/>
</dbReference>
<dbReference type="InterPro" id="IPR023010">
    <property type="entry name" value="GcvPA"/>
</dbReference>
<dbReference type="InterPro" id="IPR049315">
    <property type="entry name" value="GDC-P_N"/>
</dbReference>
<dbReference type="InterPro" id="IPR020581">
    <property type="entry name" value="GDC_P"/>
</dbReference>
<dbReference type="InterPro" id="IPR015424">
    <property type="entry name" value="PyrdxlP-dep_Trfase"/>
</dbReference>
<dbReference type="InterPro" id="IPR015421">
    <property type="entry name" value="PyrdxlP-dep_Trfase_major"/>
</dbReference>
<dbReference type="InterPro" id="IPR015422">
    <property type="entry name" value="PyrdxlP-dep_Trfase_small"/>
</dbReference>
<dbReference type="NCBIfam" id="NF001696">
    <property type="entry name" value="PRK00451.1"/>
    <property type="match status" value="1"/>
</dbReference>
<dbReference type="PANTHER" id="PTHR42806">
    <property type="entry name" value="GLYCINE CLEAVAGE SYSTEM P-PROTEIN"/>
    <property type="match status" value="1"/>
</dbReference>
<dbReference type="PANTHER" id="PTHR42806:SF1">
    <property type="entry name" value="GLYCINE DEHYDROGENASE (DECARBOXYLATING)"/>
    <property type="match status" value="1"/>
</dbReference>
<dbReference type="Pfam" id="PF02347">
    <property type="entry name" value="GDC-P"/>
    <property type="match status" value="1"/>
</dbReference>
<dbReference type="PIRSF" id="PIRSF006815">
    <property type="entry name" value="GcvPA"/>
    <property type="match status" value="1"/>
</dbReference>
<dbReference type="SUPFAM" id="SSF53383">
    <property type="entry name" value="PLP-dependent transferases"/>
    <property type="match status" value="1"/>
</dbReference>
<comment type="function">
    <text evidence="1">The glycine cleavage system catalyzes the degradation of glycine. The P protein binds the alpha-amino group of glycine through its pyridoxal phosphate cofactor; CO(2) is released and the remaining methylamine moiety is then transferred to the lipoamide cofactor of the H protein.</text>
</comment>
<comment type="catalytic activity">
    <reaction evidence="1">
        <text>N(6)-[(R)-lipoyl]-L-lysyl-[glycine-cleavage complex H protein] + glycine + H(+) = N(6)-[(R)-S(8)-aminomethyldihydrolipoyl]-L-lysyl-[glycine-cleavage complex H protein] + CO2</text>
        <dbReference type="Rhea" id="RHEA:24304"/>
        <dbReference type="Rhea" id="RHEA-COMP:10494"/>
        <dbReference type="Rhea" id="RHEA-COMP:10495"/>
        <dbReference type="ChEBI" id="CHEBI:15378"/>
        <dbReference type="ChEBI" id="CHEBI:16526"/>
        <dbReference type="ChEBI" id="CHEBI:57305"/>
        <dbReference type="ChEBI" id="CHEBI:83099"/>
        <dbReference type="ChEBI" id="CHEBI:83143"/>
        <dbReference type="EC" id="1.4.4.2"/>
    </reaction>
</comment>
<comment type="subunit">
    <text evidence="1">The glycine cleavage system is composed of four proteins: P, T, L and H. In this organism, the P 'protein' is a heterodimer of two subunits.</text>
</comment>
<comment type="similarity">
    <text evidence="1">Belongs to the GcvP family. N-terminal subunit subfamily.</text>
</comment>
<accession>B0TZJ6</accession>